<sequence length="300" mass="32968">MNQTYGRLVSRAAIAATAMASALLLIKILAWWYTGSVSILAALVDSLVDIAASLTNLLVVRYSLQPADDEHTFGHGKAESLAALAQSMFISGSALFLFLTSIQNLIKPTPMNDPGVGIGVTVIALICTIILVTFQRWVVRKTQSQAVRADMLHYQSDVMMNGAILIALGLSWYGWHRADALFALGIGIYILYSALRMGYEAVQSLLDRALPDAERQEIIDIVTSWPGVSGAHDLRTRQSGPTRFIQIHLEMEDNLPLVQAHFVADQVEQAILRRFPGSDVIIHQDPCSVVPREGRKFELV</sequence>
<dbReference type="EMBL" id="CP000026">
    <property type="protein sequence ID" value="AAV79670.1"/>
    <property type="molecule type" value="Genomic_DNA"/>
</dbReference>
<dbReference type="RefSeq" id="WP_001077325.1">
    <property type="nucleotide sequence ID" value="NC_006511.1"/>
</dbReference>
<dbReference type="SMR" id="Q5PIR7"/>
<dbReference type="KEGG" id="spt:SPA3904"/>
<dbReference type="HOGENOM" id="CLU_013430_3_0_6"/>
<dbReference type="Proteomes" id="UP000008185">
    <property type="component" value="Chromosome"/>
</dbReference>
<dbReference type="GO" id="GO:0005886">
    <property type="term" value="C:plasma membrane"/>
    <property type="evidence" value="ECO:0007669"/>
    <property type="project" value="UniProtKB-SubCell"/>
</dbReference>
<dbReference type="GO" id="GO:0015086">
    <property type="term" value="F:cadmium ion transmembrane transporter activity"/>
    <property type="evidence" value="ECO:0007669"/>
    <property type="project" value="UniProtKB-UniRule"/>
</dbReference>
<dbReference type="GO" id="GO:0015093">
    <property type="term" value="F:ferrous iron transmembrane transporter activity"/>
    <property type="evidence" value="ECO:0007669"/>
    <property type="project" value="TreeGrafter"/>
</dbReference>
<dbReference type="GO" id="GO:0046872">
    <property type="term" value="F:metal ion binding"/>
    <property type="evidence" value="ECO:0007669"/>
    <property type="project" value="UniProtKB-KW"/>
</dbReference>
<dbReference type="GO" id="GO:0015341">
    <property type="term" value="F:zinc efflux antiporter activity"/>
    <property type="evidence" value="ECO:0007669"/>
    <property type="project" value="TreeGrafter"/>
</dbReference>
<dbReference type="GO" id="GO:0006882">
    <property type="term" value="P:intracellular zinc ion homeostasis"/>
    <property type="evidence" value="ECO:0007669"/>
    <property type="project" value="TreeGrafter"/>
</dbReference>
<dbReference type="FunFam" id="1.20.1510.10:FF:000001">
    <property type="entry name" value="Ferrous-iron efflux pump FieF"/>
    <property type="match status" value="1"/>
</dbReference>
<dbReference type="FunFam" id="3.30.70.1350:FF:000002">
    <property type="entry name" value="Ferrous-iron efflux pump FieF"/>
    <property type="match status" value="1"/>
</dbReference>
<dbReference type="Gene3D" id="1.20.1510.10">
    <property type="entry name" value="Cation efflux protein transmembrane domain"/>
    <property type="match status" value="1"/>
</dbReference>
<dbReference type="Gene3D" id="3.30.70.1350">
    <property type="entry name" value="Cation efflux protein, cytoplasmic domain"/>
    <property type="match status" value="1"/>
</dbReference>
<dbReference type="HAMAP" id="MF_01425">
    <property type="entry name" value="Cation_efflux_FieF"/>
    <property type="match status" value="1"/>
</dbReference>
<dbReference type="InterPro" id="IPR002524">
    <property type="entry name" value="Cation_efflux"/>
</dbReference>
<dbReference type="InterPro" id="IPR027470">
    <property type="entry name" value="Cation_efflux_CTD"/>
</dbReference>
<dbReference type="InterPro" id="IPR036837">
    <property type="entry name" value="Cation_efflux_CTD_sf"/>
</dbReference>
<dbReference type="InterPro" id="IPR023783">
    <property type="entry name" value="Cation_efflux_FieF"/>
</dbReference>
<dbReference type="InterPro" id="IPR027469">
    <property type="entry name" value="Cation_efflux_TMD_sf"/>
</dbReference>
<dbReference type="InterPro" id="IPR050291">
    <property type="entry name" value="CDF_Transporter"/>
</dbReference>
<dbReference type="NCBIfam" id="TIGR01297">
    <property type="entry name" value="CDF"/>
    <property type="match status" value="1"/>
</dbReference>
<dbReference type="NCBIfam" id="NF007064">
    <property type="entry name" value="PRK09509.1"/>
    <property type="match status" value="1"/>
</dbReference>
<dbReference type="PANTHER" id="PTHR43840:SF41">
    <property type="entry name" value="CATION-EFFLUX PUMP FIEF"/>
    <property type="match status" value="1"/>
</dbReference>
<dbReference type="PANTHER" id="PTHR43840">
    <property type="entry name" value="MITOCHONDRIAL METAL TRANSPORTER 1-RELATED"/>
    <property type="match status" value="1"/>
</dbReference>
<dbReference type="Pfam" id="PF01545">
    <property type="entry name" value="Cation_efflux"/>
    <property type="match status" value="1"/>
</dbReference>
<dbReference type="Pfam" id="PF16916">
    <property type="entry name" value="ZT_dimer"/>
    <property type="match status" value="1"/>
</dbReference>
<dbReference type="SUPFAM" id="SSF160240">
    <property type="entry name" value="Cation efflux protein cytoplasmic domain-like"/>
    <property type="match status" value="1"/>
</dbReference>
<dbReference type="SUPFAM" id="SSF161111">
    <property type="entry name" value="Cation efflux protein transmembrane domain-like"/>
    <property type="match status" value="1"/>
</dbReference>
<reference key="1">
    <citation type="journal article" date="2004" name="Nat. Genet.">
        <title>Comparison of genome degradation in Paratyphi A and Typhi, human-restricted serovars of Salmonella enterica that cause typhoid.</title>
        <authorList>
            <person name="McClelland M."/>
            <person name="Sanderson K.E."/>
            <person name="Clifton S.W."/>
            <person name="Latreille P."/>
            <person name="Porwollik S."/>
            <person name="Sabo A."/>
            <person name="Meyer R."/>
            <person name="Bieri T."/>
            <person name="Ozersky P."/>
            <person name="McLellan M."/>
            <person name="Harkins C.R."/>
            <person name="Wang C."/>
            <person name="Nguyen C."/>
            <person name="Berghoff A."/>
            <person name="Elliott G."/>
            <person name="Kohlberg S."/>
            <person name="Strong C."/>
            <person name="Du F."/>
            <person name="Carter J."/>
            <person name="Kremizki C."/>
            <person name="Layman D."/>
            <person name="Leonard S."/>
            <person name="Sun H."/>
            <person name="Fulton L."/>
            <person name="Nash W."/>
            <person name="Miner T."/>
            <person name="Minx P."/>
            <person name="Delehaunty K."/>
            <person name="Fronick C."/>
            <person name="Magrini V."/>
            <person name="Nhan M."/>
            <person name="Warren W."/>
            <person name="Florea L."/>
            <person name="Spieth J."/>
            <person name="Wilson R.K."/>
        </authorList>
    </citation>
    <scope>NUCLEOTIDE SEQUENCE [LARGE SCALE GENOMIC DNA]</scope>
    <source>
        <strain>ATCC 9150 / SARB42</strain>
    </source>
</reference>
<name>FIEF_SALPA</name>
<accession>Q5PIR7</accession>
<organism>
    <name type="scientific">Salmonella paratyphi A (strain ATCC 9150 / SARB42)</name>
    <dbReference type="NCBI Taxonomy" id="295319"/>
    <lineage>
        <taxon>Bacteria</taxon>
        <taxon>Pseudomonadati</taxon>
        <taxon>Pseudomonadota</taxon>
        <taxon>Gammaproteobacteria</taxon>
        <taxon>Enterobacterales</taxon>
        <taxon>Enterobacteriaceae</taxon>
        <taxon>Salmonella</taxon>
    </lineage>
</organism>
<keyword id="KW-0997">Cell inner membrane</keyword>
<keyword id="KW-1003">Cell membrane</keyword>
<keyword id="KW-0406">Ion transport</keyword>
<keyword id="KW-0408">Iron</keyword>
<keyword id="KW-0410">Iron transport</keyword>
<keyword id="KW-0472">Membrane</keyword>
<keyword id="KW-0479">Metal-binding</keyword>
<keyword id="KW-0812">Transmembrane</keyword>
<keyword id="KW-1133">Transmembrane helix</keyword>
<keyword id="KW-0813">Transport</keyword>
<keyword id="KW-0862">Zinc</keyword>
<keyword id="KW-0864">Zinc transport</keyword>
<proteinExistence type="inferred from homology"/>
<feature type="chain" id="PRO_0000206129" description="Cation-efflux pump FieF">
    <location>
        <begin position="1"/>
        <end position="300"/>
    </location>
</feature>
<feature type="transmembrane region" description="Helical" evidence="1">
    <location>
        <begin position="24"/>
        <end position="44"/>
    </location>
</feature>
<feature type="transmembrane region" description="Helical" evidence="1">
    <location>
        <begin position="82"/>
        <end position="102"/>
    </location>
</feature>
<feature type="transmembrane region" description="Helical" evidence="1">
    <location>
        <begin position="114"/>
        <end position="134"/>
    </location>
</feature>
<feature type="transmembrane region" description="Helical" evidence="1">
    <location>
        <begin position="156"/>
        <end position="176"/>
    </location>
</feature>
<feature type="transmembrane region" description="Helical" evidence="1">
    <location>
        <begin position="178"/>
        <end position="198"/>
    </location>
</feature>
<feature type="binding site" evidence="1">
    <location>
        <position position="45"/>
    </location>
    <ligand>
        <name>Zn(2+)</name>
        <dbReference type="ChEBI" id="CHEBI:29105"/>
    </ligand>
</feature>
<feature type="binding site" evidence="1">
    <location>
        <position position="49"/>
    </location>
    <ligand>
        <name>Zn(2+)</name>
        <dbReference type="ChEBI" id="CHEBI:29105"/>
    </ligand>
</feature>
<feature type="binding site" evidence="1">
    <location>
        <position position="153"/>
    </location>
    <ligand>
        <name>Zn(2+)</name>
        <dbReference type="ChEBI" id="CHEBI:29105"/>
    </ligand>
</feature>
<feature type="binding site" evidence="1">
    <location>
        <position position="157"/>
    </location>
    <ligand>
        <name>Zn(2+)</name>
        <dbReference type="ChEBI" id="CHEBI:29105"/>
    </ligand>
</feature>
<gene>
    <name evidence="1" type="primary">fieF</name>
    <name type="ordered locus">SPA3904</name>
</gene>
<comment type="function">
    <text evidence="1">Divalent metal cation transporter which exports Zn(2+), Cd(2+) and possibly Fe(2+). May be involved in zinc and iron detoxification by efflux.</text>
</comment>
<comment type="catalytic activity">
    <reaction evidence="1">
        <text>Zn(2+)(in) + H(+)(out) = Zn(2+)(out) + H(+)(in)</text>
        <dbReference type="Rhea" id="RHEA:28839"/>
        <dbReference type="ChEBI" id="CHEBI:15378"/>
        <dbReference type="ChEBI" id="CHEBI:29105"/>
    </reaction>
</comment>
<comment type="catalytic activity">
    <reaction evidence="1">
        <text>Cd(2+)(in) + H(+)(out) = Cd(2+)(out) + H(+)(in)</text>
        <dbReference type="Rhea" id="RHEA:28739"/>
        <dbReference type="ChEBI" id="CHEBI:15378"/>
        <dbReference type="ChEBI" id="CHEBI:48775"/>
    </reaction>
</comment>
<comment type="catalytic activity">
    <reaction evidence="1">
        <text>Fe(2+)(in) + H(+)(out) = Fe(2+)(out) + H(+)(in)</text>
        <dbReference type="Rhea" id="RHEA:29439"/>
        <dbReference type="ChEBI" id="CHEBI:15378"/>
        <dbReference type="ChEBI" id="CHEBI:29033"/>
    </reaction>
</comment>
<comment type="subunit">
    <text evidence="1">Homodimer.</text>
</comment>
<comment type="subcellular location">
    <subcellularLocation>
        <location evidence="1">Cell inner membrane</location>
        <topology evidence="1">Multi-pass membrane protein</topology>
    </subcellularLocation>
</comment>
<comment type="similarity">
    <text evidence="1 2">Belongs to the cation diffusion facilitator (CDF) transporter (TC 2.A.4) family. FieF subfamily.</text>
</comment>
<evidence type="ECO:0000255" key="1">
    <source>
        <dbReference type="HAMAP-Rule" id="MF_01425"/>
    </source>
</evidence>
<evidence type="ECO:0000305" key="2"/>
<protein>
    <recommendedName>
        <fullName evidence="1">Cation-efflux pump FieF</fullName>
    </recommendedName>
</protein>